<name>RIMP_COREF</name>
<proteinExistence type="inferred from homology"/>
<accession>Q8FPA4</accession>
<dbReference type="EMBL" id="BA000035">
    <property type="protein sequence ID" value="BAC18691.1"/>
    <property type="status" value="ALT_INIT"/>
    <property type="molecule type" value="Genomic_DNA"/>
</dbReference>
<dbReference type="RefSeq" id="WP_006767882.1">
    <property type="nucleotide sequence ID" value="NC_004369.1"/>
</dbReference>
<dbReference type="SMR" id="Q8FPA4"/>
<dbReference type="STRING" id="196164.gene:10742309"/>
<dbReference type="KEGG" id="cef:CE1881"/>
<dbReference type="eggNOG" id="COG0779">
    <property type="taxonomic scope" value="Bacteria"/>
</dbReference>
<dbReference type="HOGENOM" id="CLU_070525_3_0_11"/>
<dbReference type="OrthoDB" id="9805006at2"/>
<dbReference type="Proteomes" id="UP000001409">
    <property type="component" value="Chromosome"/>
</dbReference>
<dbReference type="GO" id="GO:0005829">
    <property type="term" value="C:cytosol"/>
    <property type="evidence" value="ECO:0007669"/>
    <property type="project" value="TreeGrafter"/>
</dbReference>
<dbReference type="GO" id="GO:0000028">
    <property type="term" value="P:ribosomal small subunit assembly"/>
    <property type="evidence" value="ECO:0007669"/>
    <property type="project" value="TreeGrafter"/>
</dbReference>
<dbReference type="GO" id="GO:0006412">
    <property type="term" value="P:translation"/>
    <property type="evidence" value="ECO:0007669"/>
    <property type="project" value="TreeGrafter"/>
</dbReference>
<dbReference type="Gene3D" id="3.30.300.70">
    <property type="entry name" value="RimP-like superfamily, N-terminal"/>
    <property type="match status" value="1"/>
</dbReference>
<dbReference type="HAMAP" id="MF_01077">
    <property type="entry name" value="RimP"/>
    <property type="match status" value="1"/>
</dbReference>
<dbReference type="InterPro" id="IPR003728">
    <property type="entry name" value="Ribosome_maturation_RimP"/>
</dbReference>
<dbReference type="InterPro" id="IPR028998">
    <property type="entry name" value="RimP_C"/>
</dbReference>
<dbReference type="InterPro" id="IPR028989">
    <property type="entry name" value="RimP_N"/>
</dbReference>
<dbReference type="InterPro" id="IPR035956">
    <property type="entry name" value="RimP_N_sf"/>
</dbReference>
<dbReference type="NCBIfam" id="NF000930">
    <property type="entry name" value="PRK00092.2-2"/>
    <property type="match status" value="1"/>
</dbReference>
<dbReference type="PANTHER" id="PTHR33867">
    <property type="entry name" value="RIBOSOME MATURATION FACTOR RIMP"/>
    <property type="match status" value="1"/>
</dbReference>
<dbReference type="PANTHER" id="PTHR33867:SF1">
    <property type="entry name" value="RIBOSOME MATURATION FACTOR RIMP"/>
    <property type="match status" value="1"/>
</dbReference>
<dbReference type="Pfam" id="PF17384">
    <property type="entry name" value="DUF150_C"/>
    <property type="match status" value="1"/>
</dbReference>
<dbReference type="Pfam" id="PF02576">
    <property type="entry name" value="RimP_N"/>
    <property type="match status" value="1"/>
</dbReference>
<dbReference type="SUPFAM" id="SSF75420">
    <property type="entry name" value="YhbC-like, N-terminal domain"/>
    <property type="match status" value="1"/>
</dbReference>
<feature type="chain" id="PRO_0000181864" description="Ribosome maturation factor RimP">
    <location>
        <begin position="1"/>
        <end position="182"/>
    </location>
</feature>
<gene>
    <name evidence="1" type="primary">rimP</name>
    <name type="ordered locus">CE1881</name>
</gene>
<protein>
    <recommendedName>
        <fullName evidence="1">Ribosome maturation factor RimP</fullName>
    </recommendedName>
</protein>
<evidence type="ECO:0000255" key="1">
    <source>
        <dbReference type="HAMAP-Rule" id="MF_01077"/>
    </source>
</evidence>
<evidence type="ECO:0000305" key="2"/>
<comment type="function">
    <text evidence="1">Required for maturation of 30S ribosomal subunits.</text>
</comment>
<comment type="subcellular location">
    <subcellularLocation>
        <location evidence="1">Cytoplasm</location>
    </subcellularLocation>
</comment>
<comment type="similarity">
    <text evidence="1">Belongs to the RimP family.</text>
</comment>
<comment type="sequence caution" evidence="2">
    <conflict type="erroneous initiation">
        <sequence resource="EMBL-CDS" id="BAC18691"/>
    </conflict>
</comment>
<reference key="1">
    <citation type="journal article" date="2003" name="Genome Res.">
        <title>Comparative complete genome sequence analysis of the amino acid replacements responsible for the thermostability of Corynebacterium efficiens.</title>
        <authorList>
            <person name="Nishio Y."/>
            <person name="Nakamura Y."/>
            <person name="Kawarabayasi Y."/>
            <person name="Usuda Y."/>
            <person name="Kimura E."/>
            <person name="Sugimoto S."/>
            <person name="Matsui K."/>
            <person name="Yamagishi A."/>
            <person name="Kikuchi H."/>
            <person name="Ikeo K."/>
            <person name="Gojobori T."/>
        </authorList>
    </citation>
    <scope>NUCLEOTIDE SEQUENCE [LARGE SCALE GENOMIC DNA]</scope>
    <source>
        <strain>DSM 44549 / YS-314 / AJ 12310 / JCM 11189 / NBRC 100395</strain>
    </source>
</reference>
<organism>
    <name type="scientific">Corynebacterium efficiens (strain DSM 44549 / YS-314 / AJ 12310 / JCM 11189 / NBRC 100395)</name>
    <dbReference type="NCBI Taxonomy" id="196164"/>
    <lineage>
        <taxon>Bacteria</taxon>
        <taxon>Bacillati</taxon>
        <taxon>Actinomycetota</taxon>
        <taxon>Actinomycetes</taxon>
        <taxon>Mycobacteriales</taxon>
        <taxon>Corynebacteriaceae</taxon>
        <taxon>Corynebacterium</taxon>
    </lineage>
</organism>
<keyword id="KW-0963">Cytoplasm</keyword>
<keyword id="KW-1185">Reference proteome</keyword>
<keyword id="KW-0690">Ribosome biogenesis</keyword>
<sequence length="182" mass="19865">MAFPTAEELTALIAPVVATRHLDVEGLRVTKAGPKSTVAIKLDSDSRPDLDLLEVVSQEIGELFDAAEARGELSFGAGYLLEVSTPGVDMPLTQPRHWRRNRTRLVSLDVDGKKRIARIGALNAEETAVILIERNKKALSVTVLELANSPRAVVEIEFAKPAQDELDLAGRTFDEAVEETDH</sequence>